<reference key="1">
    <citation type="journal article" date="2010" name="BMC Genomics">
        <title>A genomic perspective on the potential of Actinobacillus succinogenes for industrial succinate production.</title>
        <authorList>
            <person name="McKinlay J.B."/>
            <person name="Laivenieks M."/>
            <person name="Schindler B.D."/>
            <person name="McKinlay A.A."/>
            <person name="Siddaramappa S."/>
            <person name="Challacombe J.F."/>
            <person name="Lowry S.R."/>
            <person name="Clum A."/>
            <person name="Lapidus A.L."/>
            <person name="Burkhart K.B."/>
            <person name="Harkins V."/>
            <person name="Vieille C."/>
        </authorList>
    </citation>
    <scope>NUCLEOTIDE SEQUENCE [LARGE SCALE GENOMIC DNA]</scope>
    <source>
        <strain>ATCC 55618 / DSM 22257 / CCUG 43843 / 130Z</strain>
    </source>
</reference>
<dbReference type="EMBL" id="CP000746">
    <property type="protein sequence ID" value="ABR74749.1"/>
    <property type="molecule type" value="Genomic_DNA"/>
</dbReference>
<dbReference type="RefSeq" id="WP_012073126.1">
    <property type="nucleotide sequence ID" value="NC_009655.1"/>
</dbReference>
<dbReference type="SMR" id="A6VP52"/>
<dbReference type="STRING" id="339671.Asuc_1390"/>
<dbReference type="KEGG" id="asu:Asuc_1390"/>
<dbReference type="eggNOG" id="COG3100">
    <property type="taxonomic scope" value="Bacteria"/>
</dbReference>
<dbReference type="HOGENOM" id="CLU_155118_1_0_6"/>
<dbReference type="OrthoDB" id="7062382at2"/>
<dbReference type="Proteomes" id="UP000001114">
    <property type="component" value="Chromosome"/>
</dbReference>
<dbReference type="Gene3D" id="3.10.510.20">
    <property type="entry name" value="YcgL domain"/>
    <property type="match status" value="1"/>
</dbReference>
<dbReference type="HAMAP" id="MF_01866">
    <property type="entry name" value="UPF0745"/>
    <property type="match status" value="1"/>
</dbReference>
<dbReference type="InterPro" id="IPR038068">
    <property type="entry name" value="YcgL-like_sf"/>
</dbReference>
<dbReference type="InterPro" id="IPR027354">
    <property type="entry name" value="YcgL_dom"/>
</dbReference>
<dbReference type="PANTHER" id="PTHR38109">
    <property type="entry name" value="PROTEIN YCGL"/>
    <property type="match status" value="1"/>
</dbReference>
<dbReference type="PANTHER" id="PTHR38109:SF1">
    <property type="entry name" value="PROTEIN YCGL"/>
    <property type="match status" value="1"/>
</dbReference>
<dbReference type="Pfam" id="PF05166">
    <property type="entry name" value="YcgL"/>
    <property type="match status" value="1"/>
</dbReference>
<dbReference type="SUPFAM" id="SSF160191">
    <property type="entry name" value="YcgL-like"/>
    <property type="match status" value="1"/>
</dbReference>
<dbReference type="PROSITE" id="PS51648">
    <property type="entry name" value="YCGL"/>
    <property type="match status" value="1"/>
</dbReference>
<sequence length="89" mass="10507">MLCAIYKSKKKDGMYLYIEKRDDFSVLPDSLREAFGIPVFVMLFNLVGKKTLINTDNREVMEQIKQNGFYLQMPKKDDWLFTIEKSCDL</sequence>
<keyword id="KW-1185">Reference proteome</keyword>
<feature type="chain" id="PRO_0000375275" description="YcgL domain-containing protein Asuc_1390">
    <location>
        <begin position="1"/>
        <end position="89"/>
    </location>
</feature>
<feature type="domain" description="YcgL" evidence="1">
    <location>
        <begin position="1"/>
        <end position="85"/>
    </location>
</feature>
<evidence type="ECO:0000255" key="1">
    <source>
        <dbReference type="HAMAP-Rule" id="MF_01866"/>
    </source>
</evidence>
<organism>
    <name type="scientific">Actinobacillus succinogenes (strain ATCC 55618 / DSM 22257 / CCUG 43843 / 130Z)</name>
    <dbReference type="NCBI Taxonomy" id="339671"/>
    <lineage>
        <taxon>Bacteria</taxon>
        <taxon>Pseudomonadati</taxon>
        <taxon>Pseudomonadota</taxon>
        <taxon>Gammaproteobacteria</taxon>
        <taxon>Pasteurellales</taxon>
        <taxon>Pasteurellaceae</taxon>
        <taxon>Actinobacillus</taxon>
    </lineage>
</organism>
<accession>A6VP52</accession>
<gene>
    <name type="ordered locus">Asuc_1390</name>
</gene>
<proteinExistence type="inferred from homology"/>
<protein>
    <recommendedName>
        <fullName evidence="1">YcgL domain-containing protein Asuc_1390</fullName>
    </recommendedName>
</protein>
<name>Y1390_ACTSZ</name>